<feature type="chain" id="PRO_0000292985" description="Killer cell lectin-like receptor subfamily B member 1B allele B">
    <location>
        <begin position="1"/>
        <end position="223"/>
    </location>
</feature>
<feature type="topological domain" description="Cytoplasmic" evidence="2">
    <location>
        <begin position="1"/>
        <end position="45"/>
    </location>
</feature>
<feature type="transmembrane region" description="Helical; Signal-anchor for type II membrane protein" evidence="2">
    <location>
        <begin position="46"/>
        <end position="66"/>
    </location>
</feature>
<feature type="topological domain" description="Extracellular" evidence="2">
    <location>
        <begin position="67"/>
        <end position="223"/>
    </location>
</feature>
<feature type="domain" description="C-type lectin" evidence="3">
    <location>
        <begin position="101"/>
        <end position="211"/>
    </location>
</feature>
<feature type="short sequence motif" description="ITIM motif">
    <location>
        <begin position="5"/>
        <end position="10"/>
    </location>
</feature>
<feature type="short sequence motif" description="LCK-binding motif" evidence="1">
    <location>
        <begin position="31"/>
        <end position="34"/>
    </location>
</feature>
<feature type="disulfide bond" evidence="3">
    <location>
        <begin position="122"/>
        <end position="210"/>
    </location>
</feature>
<feature type="disulfide bond" evidence="3">
    <location>
        <begin position="189"/>
        <end position="202"/>
    </location>
</feature>
<reference evidence="6 8" key="1">
    <citation type="journal article" date="2006" name="J. Immunol.">
        <title>The novel inhibitory NKR-P1C receptor and Ly49s3 identify two complementary, functionally distinct NK cell subsets in rats.</title>
        <authorList>
            <person name="Kveberg L."/>
            <person name="Baeck C.J."/>
            <person name="Dai K.-Z."/>
            <person name="Inngjerdingen M."/>
            <person name="Rolstad B."/>
            <person name="Ryan J.C."/>
            <person name="Vaage J.T."/>
            <person name="Naper C."/>
        </authorList>
    </citation>
    <scope>NUCLEOTIDE SEQUENCE [MRNA]</scope>
    <scope>FUNCTION</scope>
    <scope>SUBUNIT</scope>
    <scope>TISSUE SPECIFICITY</scope>
    <source>
        <strain evidence="8">PVG</strain>
        <tissue>Natural killer cell</tissue>
    </source>
</reference>
<reference evidence="6 9" key="2">
    <citation type="journal article" date="2007" name="Immunity">
        <title>Cytomegalovirus evasion of innate immunity by subversion of the NKR-P1B:Ocil/Clr-b missing-self axis.</title>
        <authorList>
            <person name="Voigt S."/>
            <person name="Mesci A."/>
            <person name="Ettinger J."/>
            <person name="Fine J.H."/>
            <person name="Chen P."/>
            <person name="Chou W."/>
            <person name="Carlyle J.R."/>
        </authorList>
    </citation>
    <scope>NUCLEOTIDE SEQUENCE [MRNA]</scope>
    <scope>FUNCTION</scope>
    <scope>POLYMORPHISM</scope>
    <source>
        <strain evidence="9">WAG</strain>
        <tissue>Natural killer cell</tissue>
    </source>
</reference>
<reference evidence="7" key="3">
    <citation type="submission" date="2002-06" db="EMBL/GenBank/DDBJ databases">
        <title>mRNA for NKR-P1B protein (Rattus norvegicus strain BS) expressed on NK cells and cells of the monocyte/macrophage lineage.</title>
        <authorList>
            <person name="Hundrieser J."/>
            <person name="Wonigeit K."/>
        </authorList>
    </citation>
    <scope>NUCLEOTIDE SEQUENCE [MRNA]</scope>
    <source>
        <strain evidence="7">BS</strain>
    </source>
</reference>
<gene>
    <name evidence="9" type="primary">Klrb1b</name>
    <name type="synonym">Nkrp1b</name>
    <name type="synonym">Nkrp1c</name>
</gene>
<name>KRBBB_RAT</name>
<evidence type="ECO:0000250" key="1">
    <source>
        <dbReference type="UniProtKB" id="P27812"/>
    </source>
</evidence>
<evidence type="ECO:0000255" key="2"/>
<evidence type="ECO:0000255" key="3">
    <source>
        <dbReference type="PROSITE-ProRule" id="PRU00040"/>
    </source>
</evidence>
<evidence type="ECO:0000269" key="4">
    <source>
    </source>
</evidence>
<evidence type="ECO:0000269" key="5">
    <source>
    </source>
</evidence>
<evidence type="ECO:0000305" key="6"/>
<evidence type="ECO:0000312" key="7">
    <source>
        <dbReference type="EMBL" id="AAQ08908.1"/>
    </source>
</evidence>
<evidence type="ECO:0000312" key="8">
    <source>
        <dbReference type="EMBL" id="ABA40404.1"/>
    </source>
</evidence>
<evidence type="ECO:0000312" key="9">
    <source>
        <dbReference type="EMBL" id="ABO15818.1"/>
    </source>
</evidence>
<proteinExistence type="evidence at protein level"/>
<organism>
    <name type="scientific">Rattus norvegicus</name>
    <name type="common">Rat</name>
    <dbReference type="NCBI Taxonomy" id="10116"/>
    <lineage>
        <taxon>Eukaryota</taxon>
        <taxon>Metazoa</taxon>
        <taxon>Chordata</taxon>
        <taxon>Craniata</taxon>
        <taxon>Vertebrata</taxon>
        <taxon>Euteleostomi</taxon>
        <taxon>Mammalia</taxon>
        <taxon>Eutheria</taxon>
        <taxon>Euarchontoglires</taxon>
        <taxon>Glires</taxon>
        <taxon>Rodentia</taxon>
        <taxon>Myomorpha</taxon>
        <taxon>Muroidea</taxon>
        <taxon>Muridae</taxon>
        <taxon>Murinae</taxon>
        <taxon>Rattus</taxon>
    </lineage>
</organism>
<comment type="function">
    <text evidence="4 5">Receptor for CLEC2D/OCIL. Ligand-binding contributes to inhibition of cytotoxic natural killer (NK) cells. May mediate MHC class I-independent 'missing-self' recognition of allografts, tumor cells and virus-infected cells.</text>
</comment>
<comment type="subunit">
    <text evidence="1 4">Homodimer; disulfide-linked. Interacts with tyrosine kinase LCK. Binds PTPN6/SHP-1 in a phosphorylation-dependent manner.</text>
</comment>
<comment type="subcellular location">
    <subcellularLocation>
        <location evidence="2">Membrane</location>
        <topology evidence="2">Single-pass type II membrane protein</topology>
    </subcellularLocation>
</comment>
<comment type="tissue specificity">
    <text evidence="4">Expressed in a subset of natural killer cells.</text>
</comment>
<comment type="domain">
    <text evidence="1">Contains 1 copy of a cytoplasmic motif that is referred to as the immunoreceptor tyrosine-based inhibitor motif (ITIM). The phosphorylated ITIM motif can bind the SH2 domain of several SH2-containing phosphatases leading to down-regulation of cell activation (By similarity).</text>
</comment>
<comment type="polymorphism">
    <text evidence="5">Alleles A, B and C are highly divergent forms of Klrb1b. Alleles A and B differ in their susceptibility to evasion of innate immunity by the rat cytomegalovirus (CMV). In contrast to allele B, allele A shows very low binding of a viral protein mimicking the Klrb1b ligand CLEC2D as well as low susceptibility to this MHC class I-independent viral evasion mechanism.</text>
</comment>
<dbReference type="EMBL" id="DQ157010">
    <property type="protein sequence ID" value="ABA40404.1"/>
    <property type="molecule type" value="mRNA"/>
</dbReference>
<dbReference type="EMBL" id="EF100678">
    <property type="protein sequence ID" value="ABO15818.1"/>
    <property type="molecule type" value="mRNA"/>
</dbReference>
<dbReference type="EMBL" id="AF525533">
    <property type="protein sequence ID" value="AAQ08908.1"/>
    <property type="molecule type" value="mRNA"/>
</dbReference>
<dbReference type="RefSeq" id="NP_001035279.1">
    <property type="nucleotide sequence ID" value="NM_001040189.2"/>
</dbReference>
<dbReference type="SMR" id="Q5NKN4"/>
<dbReference type="GeneID" id="678513"/>
<dbReference type="AGR" id="RGD:1583688"/>
<dbReference type="CTD" id="678513"/>
<dbReference type="RGD" id="2975">
    <property type="gene designation" value="Klrb1b"/>
</dbReference>
<dbReference type="Proteomes" id="UP000002494">
    <property type="component" value="Unplaced"/>
</dbReference>
<dbReference type="GO" id="GO:0009986">
    <property type="term" value="C:cell surface"/>
    <property type="evidence" value="ECO:0000266"/>
    <property type="project" value="RGD"/>
</dbReference>
<dbReference type="GO" id="GO:0009897">
    <property type="term" value="C:external side of plasma membrane"/>
    <property type="evidence" value="ECO:0000266"/>
    <property type="project" value="RGD"/>
</dbReference>
<dbReference type="GO" id="GO:0005886">
    <property type="term" value="C:plasma membrane"/>
    <property type="evidence" value="ECO:0000266"/>
    <property type="project" value="RGD"/>
</dbReference>
<dbReference type="GO" id="GO:0030246">
    <property type="term" value="F:carbohydrate binding"/>
    <property type="evidence" value="ECO:0007669"/>
    <property type="project" value="UniProtKB-KW"/>
</dbReference>
<dbReference type="GO" id="GO:0042802">
    <property type="term" value="F:identical protein binding"/>
    <property type="evidence" value="ECO:0000266"/>
    <property type="project" value="RGD"/>
</dbReference>
<dbReference type="GO" id="GO:0042803">
    <property type="term" value="F:protein homodimerization activity"/>
    <property type="evidence" value="ECO:0000266"/>
    <property type="project" value="RGD"/>
</dbReference>
<dbReference type="GO" id="GO:0038023">
    <property type="term" value="F:signaling receptor activity"/>
    <property type="evidence" value="ECO:0000266"/>
    <property type="project" value="RGD"/>
</dbReference>
<dbReference type="GO" id="GO:0030101">
    <property type="term" value="P:natural killer cell activation"/>
    <property type="evidence" value="ECO:0000266"/>
    <property type="project" value="RGD"/>
</dbReference>
<dbReference type="GO" id="GO:0045954">
    <property type="term" value="P:positive regulation of natural killer cell mediated cytotoxicity"/>
    <property type="evidence" value="ECO:0000266"/>
    <property type="project" value="RGD"/>
</dbReference>
<dbReference type="GO" id="GO:0042269">
    <property type="term" value="P:regulation of natural killer cell mediated cytotoxicity"/>
    <property type="evidence" value="ECO:0000318"/>
    <property type="project" value="GO_Central"/>
</dbReference>
<dbReference type="CDD" id="cd03593">
    <property type="entry name" value="CLECT_NK_receptors_like"/>
    <property type="match status" value="1"/>
</dbReference>
<dbReference type="Gene3D" id="3.10.100.10">
    <property type="entry name" value="Mannose-Binding Protein A, subunit A"/>
    <property type="match status" value="1"/>
</dbReference>
<dbReference type="InterPro" id="IPR001304">
    <property type="entry name" value="C-type_lectin-like"/>
</dbReference>
<dbReference type="InterPro" id="IPR016186">
    <property type="entry name" value="C-type_lectin-like/link_sf"/>
</dbReference>
<dbReference type="InterPro" id="IPR016187">
    <property type="entry name" value="CTDL_fold"/>
</dbReference>
<dbReference type="InterPro" id="IPR051527">
    <property type="entry name" value="KLR_subfamily_B"/>
</dbReference>
<dbReference type="InterPro" id="IPR033992">
    <property type="entry name" value="NKR-like_CTLD"/>
</dbReference>
<dbReference type="PANTHER" id="PTHR46784">
    <property type="entry name" value="KILLER CELL LECTIN-LIKE RECEPTOR SUBFAMILY B MEMBER 1"/>
    <property type="match status" value="1"/>
</dbReference>
<dbReference type="PANTHER" id="PTHR46784:SF1">
    <property type="entry name" value="KILLER CELL LECTIN-LIKE RECEPTOR SUBFAMILY B MEMBER 1"/>
    <property type="match status" value="1"/>
</dbReference>
<dbReference type="Pfam" id="PF00059">
    <property type="entry name" value="Lectin_C"/>
    <property type="match status" value="1"/>
</dbReference>
<dbReference type="SMART" id="SM00034">
    <property type="entry name" value="CLECT"/>
    <property type="match status" value="1"/>
</dbReference>
<dbReference type="SUPFAM" id="SSF56436">
    <property type="entry name" value="C-type lectin-like"/>
    <property type="match status" value="1"/>
</dbReference>
<dbReference type="PROSITE" id="PS50041">
    <property type="entry name" value="C_TYPE_LECTIN_2"/>
    <property type="match status" value="1"/>
</dbReference>
<protein>
    <recommendedName>
        <fullName>Killer cell lectin-like receptor subfamily B member 1B allele B</fullName>
    </recommendedName>
    <alternativeName>
        <fullName>CD161 antigen-like family member B</fullName>
    </alternativeName>
    <alternativeName>
        <fullName>Immunoreceptor NKR-P1C</fullName>
    </alternativeName>
    <alternativeName>
        <fullName>Natural killer cell surface protein NKR-P1B allele WAG/PVG/BS</fullName>
    </alternativeName>
    <alternativeName>
        <fullName>Natural killer lymphocyte receptor P1B</fullName>
    </alternativeName>
    <cdAntigenName>CD161b</cdAntigenName>
</protein>
<accession>Q5NKN4</accession>
<keyword id="KW-1015">Disulfide bond</keyword>
<keyword id="KW-0430">Lectin</keyword>
<keyword id="KW-0472">Membrane</keyword>
<keyword id="KW-0675">Receptor</keyword>
<keyword id="KW-1185">Reference proteome</keyword>
<keyword id="KW-0735">Signal-anchor</keyword>
<keyword id="KW-0812">Transmembrane</keyword>
<keyword id="KW-1133">Transmembrane helix</keyword>
<sequence length="223" mass="24884">MDTAVVYADLHLARTGEPKHKSPPSLSPDTCQCPRWHRLALKLGCACLILLVLSVIGLGVLVLTLLQKPLIQNSPADVQENRTKTTDSPTKLKCPKDWHSHQDKCFHVSQAPNTWNKSLADCGGKGATLLLIQDQEELRFLRNLTKGKDRSFWIGLNYTLPDKNWKWINSSTLNSDVLSIFGDTKQNSCASISQDKVLSESCDSDNLWICQKELKCECMCNGS</sequence>